<proteinExistence type="inferred from homology"/>
<reference key="1">
    <citation type="submission" date="2008-10" db="EMBL/GenBank/DDBJ databases">
        <title>Genome sequence of Bacillus cereus AH187.</title>
        <authorList>
            <person name="Dodson R.J."/>
            <person name="Durkin A.S."/>
            <person name="Rosovitz M.J."/>
            <person name="Rasko D.A."/>
            <person name="Kolsto A.B."/>
            <person name="Okstad O.A."/>
            <person name="Ravel J."/>
            <person name="Sutton G."/>
        </authorList>
    </citation>
    <scope>NUCLEOTIDE SEQUENCE [LARGE SCALE GENOMIC DNA]</scope>
    <source>
        <strain>AH187</strain>
    </source>
</reference>
<sequence>MPTPSMEDYIEQIYLLIDEKGYARVSDIAEALSVHPSSVTKMVQKLDKDEYLIYEKYRGLVLTSKGKKIGERLVYRHELLEQFMRIIGVDESKIYNDVEGIEHHLSWEAIDRIGDLVQYFEQDEVRVETLRGVQKANEEKSN</sequence>
<comment type="function">
    <text evidence="1">Central regulator of manganese homeostasis.</text>
</comment>
<comment type="activity regulation">
    <text evidence="1">DNA binding is strongly activated by Mn(2+).</text>
</comment>
<comment type="subunit">
    <text evidence="1">Homodimer.</text>
</comment>
<comment type="subcellular location">
    <subcellularLocation>
        <location evidence="1">Cytoplasm</location>
    </subcellularLocation>
</comment>
<comment type="similarity">
    <text evidence="1">Belongs to the DtxR/MntR family.</text>
</comment>
<gene>
    <name evidence="1" type="primary">mntR</name>
    <name type="ordered locus">BCAH187_A4333</name>
</gene>
<accession>B7HNW6</accession>
<evidence type="ECO:0000255" key="1">
    <source>
        <dbReference type="HAMAP-Rule" id="MF_00732"/>
    </source>
</evidence>
<organism>
    <name type="scientific">Bacillus cereus (strain AH187)</name>
    <dbReference type="NCBI Taxonomy" id="405534"/>
    <lineage>
        <taxon>Bacteria</taxon>
        <taxon>Bacillati</taxon>
        <taxon>Bacillota</taxon>
        <taxon>Bacilli</taxon>
        <taxon>Bacillales</taxon>
        <taxon>Bacillaceae</taxon>
        <taxon>Bacillus</taxon>
        <taxon>Bacillus cereus group</taxon>
    </lineage>
</organism>
<dbReference type="EMBL" id="CP001177">
    <property type="protein sequence ID" value="ACJ79870.1"/>
    <property type="molecule type" value="Genomic_DNA"/>
</dbReference>
<dbReference type="SMR" id="B7HNW6"/>
<dbReference type="KEGG" id="bcr:BCAH187_A4333"/>
<dbReference type="HOGENOM" id="CLU_069532_3_0_9"/>
<dbReference type="Proteomes" id="UP000002214">
    <property type="component" value="Chromosome"/>
</dbReference>
<dbReference type="GO" id="GO:0005737">
    <property type="term" value="C:cytoplasm"/>
    <property type="evidence" value="ECO:0007669"/>
    <property type="project" value="UniProtKB-SubCell"/>
</dbReference>
<dbReference type="GO" id="GO:0003677">
    <property type="term" value="F:DNA binding"/>
    <property type="evidence" value="ECO:0007669"/>
    <property type="project" value="UniProtKB-KW"/>
</dbReference>
<dbReference type="GO" id="GO:0003700">
    <property type="term" value="F:DNA-binding transcription factor activity"/>
    <property type="evidence" value="ECO:0007669"/>
    <property type="project" value="UniProtKB-UniRule"/>
</dbReference>
<dbReference type="GO" id="GO:0030145">
    <property type="term" value="F:manganese ion binding"/>
    <property type="evidence" value="ECO:0007669"/>
    <property type="project" value="UniProtKB-UniRule"/>
</dbReference>
<dbReference type="GO" id="GO:0046983">
    <property type="term" value="F:protein dimerization activity"/>
    <property type="evidence" value="ECO:0007669"/>
    <property type="project" value="InterPro"/>
</dbReference>
<dbReference type="GO" id="GO:0030026">
    <property type="term" value="P:intracellular manganese ion homeostasis"/>
    <property type="evidence" value="ECO:0007669"/>
    <property type="project" value="UniProtKB-UniRule"/>
</dbReference>
<dbReference type="FunFam" id="1.10.10.10:FF:000189">
    <property type="entry name" value="HTH-type transcriptional regulator MntR"/>
    <property type="match status" value="1"/>
</dbReference>
<dbReference type="FunFam" id="1.10.60.10:FF:000003">
    <property type="entry name" value="HTH-type transcriptional regulator MntR"/>
    <property type="match status" value="1"/>
</dbReference>
<dbReference type="Gene3D" id="1.10.60.10">
    <property type="entry name" value="Iron dependent repressor, metal binding and dimerisation domain"/>
    <property type="match status" value="1"/>
</dbReference>
<dbReference type="Gene3D" id="1.10.10.10">
    <property type="entry name" value="Winged helix-like DNA-binding domain superfamily/Winged helix DNA-binding domain"/>
    <property type="match status" value="1"/>
</dbReference>
<dbReference type="HAMAP" id="MF_00732">
    <property type="entry name" value="HTH_MntR"/>
    <property type="match status" value="1"/>
</dbReference>
<dbReference type="InterPro" id="IPR050536">
    <property type="entry name" value="DtxR_MntR_Metal-Reg"/>
</dbReference>
<dbReference type="InterPro" id="IPR001367">
    <property type="entry name" value="Fe_dep_repressor"/>
</dbReference>
<dbReference type="InterPro" id="IPR036421">
    <property type="entry name" value="Fe_dep_repressor_sf"/>
</dbReference>
<dbReference type="InterPro" id="IPR022687">
    <property type="entry name" value="HTH_DTXR"/>
</dbReference>
<dbReference type="InterPro" id="IPR022897">
    <property type="entry name" value="HTH_tscrpt_reg_MntR"/>
</dbReference>
<dbReference type="InterPro" id="IPR022689">
    <property type="entry name" value="Iron_dep_repressor"/>
</dbReference>
<dbReference type="InterPro" id="IPR036388">
    <property type="entry name" value="WH-like_DNA-bd_sf"/>
</dbReference>
<dbReference type="InterPro" id="IPR036390">
    <property type="entry name" value="WH_DNA-bd_sf"/>
</dbReference>
<dbReference type="NCBIfam" id="NF003025">
    <property type="entry name" value="PRK03902.1"/>
    <property type="match status" value="1"/>
</dbReference>
<dbReference type="PANTHER" id="PTHR33238">
    <property type="entry name" value="IRON (METAL) DEPENDENT REPRESSOR, DTXR FAMILY"/>
    <property type="match status" value="1"/>
</dbReference>
<dbReference type="PANTHER" id="PTHR33238:SF11">
    <property type="entry name" value="TRANSCRIPTIONAL REGULATOR MNTR"/>
    <property type="match status" value="1"/>
</dbReference>
<dbReference type="Pfam" id="PF02742">
    <property type="entry name" value="Fe_dep_repr_C"/>
    <property type="match status" value="1"/>
</dbReference>
<dbReference type="Pfam" id="PF01325">
    <property type="entry name" value="Fe_dep_repress"/>
    <property type="match status" value="1"/>
</dbReference>
<dbReference type="SMART" id="SM00529">
    <property type="entry name" value="HTH_DTXR"/>
    <property type="match status" value="1"/>
</dbReference>
<dbReference type="SUPFAM" id="SSF47979">
    <property type="entry name" value="Iron-dependent repressor protein, dimerization domain"/>
    <property type="match status" value="1"/>
</dbReference>
<dbReference type="SUPFAM" id="SSF46785">
    <property type="entry name" value="Winged helix' DNA-binding domain"/>
    <property type="match status" value="1"/>
</dbReference>
<dbReference type="PROSITE" id="PS50944">
    <property type="entry name" value="HTH_DTXR"/>
    <property type="match status" value="1"/>
</dbReference>
<feature type="chain" id="PRO_1000132745" description="HTH-type transcriptional regulator MntR">
    <location>
        <begin position="1"/>
        <end position="142"/>
    </location>
</feature>
<feature type="domain" description="HTH dtxR-type" evidence="1">
    <location>
        <begin position="1"/>
        <end position="63"/>
    </location>
</feature>
<feature type="binding site" evidence="1">
    <location>
        <position position="8"/>
    </location>
    <ligand>
        <name>Mn(2+)</name>
        <dbReference type="ChEBI" id="CHEBI:29035"/>
        <label>1</label>
    </ligand>
</feature>
<feature type="binding site" evidence="1">
    <location>
        <position position="11"/>
    </location>
    <ligand>
        <name>Mn(2+)</name>
        <dbReference type="ChEBI" id="CHEBI:29035"/>
        <label>2</label>
    </ligand>
</feature>
<feature type="binding site" evidence="1">
    <location>
        <position position="77"/>
    </location>
    <ligand>
        <name>Mn(2+)</name>
        <dbReference type="ChEBI" id="CHEBI:29035"/>
        <label>2</label>
    </ligand>
</feature>
<feature type="binding site" evidence="1">
    <location>
        <position position="99"/>
    </location>
    <ligand>
        <name>Mn(2+)</name>
        <dbReference type="ChEBI" id="CHEBI:29035"/>
        <label>1</label>
    </ligand>
</feature>
<feature type="binding site" evidence="1">
    <location>
        <position position="99"/>
    </location>
    <ligand>
        <name>Mn(2+)</name>
        <dbReference type="ChEBI" id="CHEBI:29035"/>
        <label>2</label>
    </ligand>
</feature>
<feature type="binding site" evidence="1">
    <location>
        <position position="102"/>
    </location>
    <ligand>
        <name>Mn(2+)</name>
        <dbReference type="ChEBI" id="CHEBI:29035"/>
        <label>1</label>
    </ligand>
</feature>
<feature type="binding site" evidence="1">
    <location>
        <position position="102"/>
    </location>
    <ligand>
        <name>Mn(2+)</name>
        <dbReference type="ChEBI" id="CHEBI:29035"/>
        <label>2</label>
    </ligand>
</feature>
<feature type="binding site" evidence="1">
    <location>
        <position position="103"/>
    </location>
    <ligand>
        <name>Mn(2+)</name>
        <dbReference type="ChEBI" id="CHEBI:29035"/>
        <label>1</label>
    </ligand>
</feature>
<keyword id="KW-0010">Activator</keyword>
<keyword id="KW-0963">Cytoplasm</keyword>
<keyword id="KW-0238">DNA-binding</keyword>
<keyword id="KW-0464">Manganese</keyword>
<keyword id="KW-0479">Metal-binding</keyword>
<keyword id="KW-0678">Repressor</keyword>
<keyword id="KW-0804">Transcription</keyword>
<keyword id="KW-0805">Transcription regulation</keyword>
<protein>
    <recommendedName>
        <fullName evidence="1">HTH-type transcriptional regulator MntR</fullName>
    </recommendedName>
    <alternativeName>
        <fullName evidence="1">Manganese transport regulator</fullName>
    </alternativeName>
</protein>
<name>MNTR_BACC7</name>